<proteinExistence type="predicted"/>
<organism>
    <name type="scientific">Orgyia pseudotsugata multicapsid polyhedrosis virus</name>
    <name type="common">OpMNPV</name>
    <dbReference type="NCBI Taxonomy" id="262177"/>
    <lineage>
        <taxon>Viruses</taxon>
        <taxon>Viruses incertae sedis</taxon>
        <taxon>Naldaviricetes</taxon>
        <taxon>Lefavirales</taxon>
        <taxon>Baculoviridae</taxon>
        <taxon>Alphabaculovirus</taxon>
        <taxon>Alphabaculovirus orpseudotsugatae</taxon>
    </lineage>
</organism>
<protein>
    <recommendedName>
        <fullName>FP protein</fullName>
    </recommendedName>
</protein>
<accession>O10318</accession>
<name>FP_NPVOP</name>
<feature type="chain" id="PRO_0000132872" description="FP protein">
    <location>
        <begin position="1"/>
        <end position="208"/>
    </location>
</feature>
<dbReference type="EMBL" id="U75930">
    <property type="protein sequence ID" value="AAC59063.1"/>
    <property type="molecule type" value="Genomic_DNA"/>
</dbReference>
<dbReference type="RefSeq" id="NP_046220.1">
    <property type="nucleotide sequence ID" value="NC_001875.2"/>
</dbReference>
<dbReference type="KEGG" id="vg:912024"/>
<dbReference type="OrthoDB" id="15947at10239"/>
<dbReference type="Proteomes" id="UP000009248">
    <property type="component" value="Genome"/>
</dbReference>
<dbReference type="InterPro" id="IPR004941">
    <property type="entry name" value="FP_N"/>
</dbReference>
<dbReference type="Pfam" id="PF03258">
    <property type="entry name" value="Baculo_FP"/>
    <property type="match status" value="1"/>
</dbReference>
<dbReference type="Pfam" id="PF25298">
    <property type="entry name" value="Baculo_FP_2nd"/>
    <property type="match status" value="1"/>
</dbReference>
<sequence length="208" mass="24205">MDRFEQLINVALLKSLINTQIDESDDIKSMNVKLKELERDRLNDSVEIYGVHDARLGSKKMRTYYLKKICALLDLDFKHVLDSAFHKNHMVVKLSDSARAKEWQSKSRERRLKNHSLGIDYDGPVKIFVAAPPEQKLLLKKARDALLPVYKYISICKHGVMVRRDEKSRVFIVKDEQHINYLKTNDLFAFDKAGAFRADGQRMLENII</sequence>
<gene>
    <name type="primary">FP</name>
    <name type="ORF">ORF64</name>
</gene>
<organismHost>
    <name type="scientific">Orgyia pseudotsugata</name>
    <name type="common">Douglas-fir tussock moth</name>
    <dbReference type="NCBI Taxonomy" id="33414"/>
</organismHost>
<reference key="1">
    <citation type="journal article" date="1997" name="Virology">
        <title>The sequence of the Orgyia pseudotsugata multinucleocapsid nuclear polyhedrosis virus genome.</title>
        <authorList>
            <person name="Ahrens C.H."/>
            <person name="Russell R.R."/>
            <person name="Funk C.J."/>
            <person name="Evans J."/>
            <person name="Harwood S."/>
            <person name="Rohrmann G.F."/>
        </authorList>
    </citation>
    <scope>NUCLEOTIDE SEQUENCE [LARGE SCALE GENOMIC DNA]</scope>
</reference>
<keyword id="KW-1185">Reference proteome</keyword>